<name>GIT1_CANAL</name>
<evidence type="ECO:0000255" key="1"/>
<evidence type="ECO:0000255" key="2">
    <source>
        <dbReference type="PROSITE-ProRule" id="PRU00498"/>
    </source>
</evidence>
<evidence type="ECO:0000256" key="3">
    <source>
        <dbReference type="SAM" id="MobiDB-lite"/>
    </source>
</evidence>
<evidence type="ECO:0000269" key="4">
    <source>
    </source>
</evidence>
<evidence type="ECO:0000269" key="5">
    <source>
    </source>
</evidence>
<evidence type="ECO:0000269" key="6">
    <source>
    </source>
</evidence>
<evidence type="ECO:0000303" key="7">
    <source>
    </source>
</evidence>
<evidence type="ECO:0000303" key="8">
    <source>
    </source>
</evidence>
<evidence type="ECO:0000305" key="9"/>
<evidence type="ECO:0000305" key="10">
    <source>
    </source>
</evidence>
<organism>
    <name type="scientific">Candida albicans (strain SC5314 / ATCC MYA-2876)</name>
    <name type="common">Yeast</name>
    <dbReference type="NCBI Taxonomy" id="237561"/>
    <lineage>
        <taxon>Eukaryota</taxon>
        <taxon>Fungi</taxon>
        <taxon>Dikarya</taxon>
        <taxon>Ascomycota</taxon>
        <taxon>Saccharomycotina</taxon>
        <taxon>Pichiomycetes</taxon>
        <taxon>Debaryomycetaceae</taxon>
        <taxon>Candida/Lodderomyces clade</taxon>
        <taxon>Candida</taxon>
    </lineage>
</organism>
<feature type="chain" id="PRO_0000439798" description="Glycerophosphoinositol permease 1">
    <location>
        <begin position="1"/>
        <end position="519"/>
    </location>
</feature>
<feature type="transmembrane region" description="Helical" evidence="1">
    <location>
        <begin position="39"/>
        <end position="59"/>
    </location>
</feature>
<feature type="transmembrane region" description="Helical" evidence="1">
    <location>
        <begin position="94"/>
        <end position="114"/>
    </location>
</feature>
<feature type="transmembrane region" description="Helical" evidence="1">
    <location>
        <begin position="117"/>
        <end position="137"/>
    </location>
</feature>
<feature type="transmembrane region" description="Helical" evidence="1">
    <location>
        <begin position="141"/>
        <end position="161"/>
    </location>
</feature>
<feature type="transmembrane region" description="Helical" evidence="1">
    <location>
        <begin position="186"/>
        <end position="206"/>
    </location>
</feature>
<feature type="transmembrane region" description="Helical" evidence="1">
    <location>
        <begin position="216"/>
        <end position="236"/>
    </location>
</feature>
<feature type="transmembrane region" description="Helical" evidence="1">
    <location>
        <begin position="273"/>
        <end position="293"/>
    </location>
</feature>
<feature type="transmembrane region" description="Helical" evidence="1">
    <location>
        <begin position="313"/>
        <end position="333"/>
    </location>
</feature>
<feature type="transmembrane region" description="Helical" evidence="1">
    <location>
        <begin position="337"/>
        <end position="357"/>
    </location>
</feature>
<feature type="transmembrane region" description="Helical" evidence="1">
    <location>
        <begin position="363"/>
        <end position="383"/>
    </location>
</feature>
<feature type="transmembrane region" description="Helical" evidence="1">
    <location>
        <begin position="404"/>
        <end position="424"/>
    </location>
</feature>
<feature type="transmembrane region" description="Helical" evidence="1">
    <location>
        <begin position="432"/>
        <end position="452"/>
    </location>
</feature>
<feature type="region of interest" description="Disordered" evidence="3">
    <location>
        <begin position="1"/>
        <end position="32"/>
    </location>
</feature>
<feature type="region of interest" description="Disordered" evidence="3">
    <location>
        <begin position="487"/>
        <end position="519"/>
    </location>
</feature>
<feature type="compositionally biased region" description="Acidic residues" evidence="3">
    <location>
        <begin position="487"/>
        <end position="500"/>
    </location>
</feature>
<feature type="compositionally biased region" description="Basic and acidic residues" evidence="3">
    <location>
        <begin position="508"/>
        <end position="519"/>
    </location>
</feature>
<feature type="glycosylation site" description="N-linked (GlcNAc...) asparagine" evidence="2">
    <location>
        <position position="93"/>
    </location>
</feature>
<feature type="glycosylation site" description="N-linked (GlcNAc...) asparagine" evidence="2">
    <location>
        <position position="175"/>
    </location>
</feature>
<feature type="glycosylation site" description="N-linked (GlcNAc...) asparagine" evidence="2">
    <location>
        <position position="506"/>
    </location>
</feature>
<comment type="function">
    <text evidence="5 6">Glycerophosphodiester transporter that mediates uptake of glycerophosphoinositol (GroPIns) as a source of inositol and phosphate (PubMed:21984707, PubMed:24114876). Does not possess detectable glycerophosphocholine (GroPCho) transport activity (PubMed:21984707). Although no glycerophosphoinositol transport activity occurs in the absence of GIT1, C.albicans is still able to use glycerophosphoinositol as a phosphate source at pH 7.5, albeit slowly (PubMed:21984707). Thus, a second, GIT1-independent, mechanism must exist for utilizing glycerophosphoinositol as a phosphate source at physiological pH (PubMed:21984707, PubMed:24114876). The expanded ability to utilize GroPIns and GroPCho results from the organism's pathogenic nature and its need to occupy a variety of environments within its host organism (PubMed:21984707). This possibility is buttressed by the fact that GroPIns and GroPCho are present and abundant in human fluids (PubMed:21984707, PubMed:24114876).</text>
</comment>
<comment type="catalytic activity">
    <reaction evidence="5">
        <text>sn-glycero-3-phospho-1D-myo-inositol(out) = sn-glycero-3-phospho-1D-myo-inositol(in)</text>
        <dbReference type="Rhea" id="RHEA:32915"/>
        <dbReference type="ChEBI" id="CHEBI:58444"/>
    </reaction>
    <physiologicalReaction direction="left-to-right" evidence="5">
        <dbReference type="Rhea" id="RHEA:32916"/>
    </physiologicalReaction>
</comment>
<comment type="biophysicochemical properties">
    <kinetics>
        <KM evidence="5">28 uM for glycerophosphoinositol transport</KM>
    </kinetics>
</comment>
<comment type="subcellular location">
    <subcellularLocation>
        <location evidence="10">Cell membrane</location>
        <topology evidence="1">Multi-pass membrane protein</topology>
    </subcellularLocation>
</comment>
<comment type="induction">
    <text evidence="4 5">Phosphate levels regulate glycerophosphoinositol transport activity and transcription factor PHO4 is required for GIT1 expression (PubMed:21984707). Expression profile differs significantly in isolates of high, medium, and low virulence, being the highest in the most virulent strains (PubMed:19151328).</text>
</comment>
<comment type="disruption phenotype">
    <text evidence="5">Abolished the utilization of glycerophosphoinositol(GroPIns) as a phosphate source (PubMed:21984707).</text>
</comment>
<comment type="similarity">
    <text evidence="9">Belongs to the major facilitator superfamily. Sugar transporter (TC 2.A.1.1) family.</text>
</comment>
<gene>
    <name evidence="8" type="primary">GIT1</name>
    <name type="synonym">GIT99</name>
    <name type="ordered locus">CAALFM_C206590CA</name>
    <name evidence="7" type="ORF">orf19.34</name>
</gene>
<sequence>MSDLVKSSEVIETTEVPPHNNNNNKRHFKYDSEQRKQRLAGGVKLKDALMILCAGFALISDGYQNNVMSMMNKVFALEYPKEYTASLSTQVSNASLVGTIFGQVIIGLTADYIGRKWSIVTATCFLIFGTMMCAASHGKTVNGMFWMLTIFRGVTGFGIGAEYPSSSVTASEAANESVKRRGGAFILATNLPLSFGGPFALCIFLIVRRICGNHLDAIWRTMFAIGCFWPLSVFYFRLKMVTSELYTKSAIKQRAPYWLALKYYWPRLIGTCVAWFLYDFVTFPNGIFSAGIISNVIPKSEKNNLEKIAEWNLLLGAIALPGVFVGAYVVDILGRKYTMMIGFCGYIVFGLIVGCGYHQIKPITGLFIVFYGLMMSCGNFGPGNNMGLTSSESFATPIRGTAYGISAAIGKVGAVVGTKTFSPIQKNLGDKWTFIIAAICGLAGVLVTFIFIPHLKDEDLLEEDVKFKNYLIDNGWKGKFGIQEYDEEEDLEGSSEDSSDGEIVKNNTKNDVEKVDALK</sequence>
<keyword id="KW-1003">Cell membrane</keyword>
<keyword id="KW-0325">Glycoprotein</keyword>
<keyword id="KW-0472">Membrane</keyword>
<keyword id="KW-1185">Reference proteome</keyword>
<keyword id="KW-0812">Transmembrane</keyword>
<keyword id="KW-1133">Transmembrane helix</keyword>
<keyword id="KW-0813">Transport</keyword>
<keyword id="KW-0843">Virulence</keyword>
<proteinExistence type="evidence at protein level"/>
<accession>Q59Q30</accession>
<protein>
    <recommendedName>
        <fullName evidence="8">Glycerophosphoinositol permease 1</fullName>
    </recommendedName>
    <alternativeName>
        <fullName evidence="9">Glycerophosphodiester transporter GIT1</fullName>
    </alternativeName>
</protein>
<dbReference type="EMBL" id="CP017624">
    <property type="protein sequence ID" value="AOW27660.1"/>
    <property type="molecule type" value="Genomic_DNA"/>
</dbReference>
<dbReference type="RefSeq" id="XP_711841.1">
    <property type="nucleotide sequence ID" value="XM_706749.1"/>
</dbReference>
<dbReference type="SMR" id="Q59Q30"/>
<dbReference type="FunCoup" id="Q59Q30">
    <property type="interactions" value="33"/>
</dbReference>
<dbReference type="STRING" id="237561.Q59Q30"/>
<dbReference type="GlyCosmos" id="Q59Q30">
    <property type="glycosylation" value="3 sites, No reported glycans"/>
</dbReference>
<dbReference type="EnsemblFungi" id="C2_06590C_A-T">
    <property type="protein sequence ID" value="C2_06590C_A-T-p1"/>
    <property type="gene ID" value="C2_06590C_A"/>
</dbReference>
<dbReference type="GeneID" id="3646562"/>
<dbReference type="KEGG" id="cal:CAALFM_C206590CA"/>
<dbReference type="CGD" id="CAL0000193792">
    <property type="gene designation" value="GIT1"/>
</dbReference>
<dbReference type="VEuPathDB" id="FungiDB:C2_06590C_A"/>
<dbReference type="eggNOG" id="KOG0252">
    <property type="taxonomic scope" value="Eukaryota"/>
</dbReference>
<dbReference type="HOGENOM" id="CLU_001265_46_12_1"/>
<dbReference type="InParanoid" id="Q59Q30"/>
<dbReference type="OMA" id="RGPIFIL"/>
<dbReference type="OrthoDB" id="2153661at2759"/>
<dbReference type="Proteomes" id="UP000000559">
    <property type="component" value="Chromosome 2"/>
</dbReference>
<dbReference type="GO" id="GO:0016020">
    <property type="term" value="C:membrane"/>
    <property type="evidence" value="ECO:0000318"/>
    <property type="project" value="GO_Central"/>
</dbReference>
<dbReference type="GO" id="GO:0005886">
    <property type="term" value="C:plasma membrane"/>
    <property type="evidence" value="ECO:0007669"/>
    <property type="project" value="UniProtKB-SubCell"/>
</dbReference>
<dbReference type="GO" id="GO:0015169">
    <property type="term" value="F:glycerol-3-phosphate transmembrane transporter activity"/>
    <property type="evidence" value="ECO:0007669"/>
    <property type="project" value="EnsemblFungi"/>
</dbReference>
<dbReference type="GO" id="GO:0001406">
    <property type="term" value="F:glycerophosphodiester transmembrane transporter activity"/>
    <property type="evidence" value="ECO:0000314"/>
    <property type="project" value="CGD"/>
</dbReference>
<dbReference type="GO" id="GO:0022857">
    <property type="term" value="F:transmembrane transporter activity"/>
    <property type="evidence" value="ECO:0000318"/>
    <property type="project" value="GO_Central"/>
</dbReference>
<dbReference type="GO" id="GO:0001407">
    <property type="term" value="P:glycerophosphodiester transmembrane transport"/>
    <property type="evidence" value="ECO:0000314"/>
    <property type="project" value="CGD"/>
</dbReference>
<dbReference type="GO" id="GO:0055085">
    <property type="term" value="P:transmembrane transport"/>
    <property type="evidence" value="ECO:0000318"/>
    <property type="project" value="GO_Central"/>
</dbReference>
<dbReference type="CDD" id="cd17364">
    <property type="entry name" value="MFS_PhT"/>
    <property type="match status" value="1"/>
</dbReference>
<dbReference type="FunFam" id="1.20.1250.20:FF:000140">
    <property type="entry name" value="Putative MFS phospholipid transporter"/>
    <property type="match status" value="1"/>
</dbReference>
<dbReference type="Gene3D" id="1.20.1250.20">
    <property type="entry name" value="MFS general substrate transporter like domains"/>
    <property type="match status" value="1"/>
</dbReference>
<dbReference type="InterPro" id="IPR020846">
    <property type="entry name" value="MFS_dom"/>
</dbReference>
<dbReference type="InterPro" id="IPR005828">
    <property type="entry name" value="MFS_sugar_transport-like"/>
</dbReference>
<dbReference type="InterPro" id="IPR036259">
    <property type="entry name" value="MFS_trans_sf"/>
</dbReference>
<dbReference type="InterPro" id="IPR005829">
    <property type="entry name" value="Sugar_transporter_CS"/>
</dbReference>
<dbReference type="PANTHER" id="PTHR23508">
    <property type="entry name" value="CARBOXYLIC ACID TRANSPORTER PROTEIN HOMOLOG"/>
    <property type="match status" value="1"/>
</dbReference>
<dbReference type="PANTHER" id="PTHR23508:SF10">
    <property type="entry name" value="CARBOXYLIC ACID TRANSPORTER PROTEIN HOMOLOG"/>
    <property type="match status" value="1"/>
</dbReference>
<dbReference type="Pfam" id="PF00083">
    <property type="entry name" value="Sugar_tr"/>
    <property type="match status" value="1"/>
</dbReference>
<dbReference type="SUPFAM" id="SSF103473">
    <property type="entry name" value="MFS general substrate transporter"/>
    <property type="match status" value="1"/>
</dbReference>
<dbReference type="PROSITE" id="PS50850">
    <property type="entry name" value="MFS"/>
    <property type="match status" value="1"/>
</dbReference>
<dbReference type="PROSITE" id="PS00216">
    <property type="entry name" value="SUGAR_TRANSPORT_1"/>
    <property type="match status" value="2"/>
</dbReference>
<reference key="1">
    <citation type="journal article" date="2004" name="Proc. Natl. Acad. Sci. U.S.A.">
        <title>The diploid genome sequence of Candida albicans.</title>
        <authorList>
            <person name="Jones T."/>
            <person name="Federspiel N.A."/>
            <person name="Chibana H."/>
            <person name="Dungan J."/>
            <person name="Kalman S."/>
            <person name="Magee B.B."/>
            <person name="Newport G."/>
            <person name="Thorstenson Y.R."/>
            <person name="Agabian N."/>
            <person name="Magee P.T."/>
            <person name="Davis R.W."/>
            <person name="Scherer S."/>
        </authorList>
    </citation>
    <scope>NUCLEOTIDE SEQUENCE [LARGE SCALE GENOMIC DNA]</scope>
    <source>
        <strain>SC5314 / ATCC MYA-2876</strain>
    </source>
</reference>
<reference key="2">
    <citation type="journal article" date="2007" name="Genome Biol.">
        <title>Assembly of the Candida albicans genome into sixteen supercontigs aligned on the eight chromosomes.</title>
        <authorList>
            <person name="van het Hoog M."/>
            <person name="Rast T.J."/>
            <person name="Martchenko M."/>
            <person name="Grindle S."/>
            <person name="Dignard D."/>
            <person name="Hogues H."/>
            <person name="Cuomo C."/>
            <person name="Berriman M."/>
            <person name="Scherer S."/>
            <person name="Magee B.B."/>
            <person name="Whiteway M."/>
            <person name="Chibana H."/>
            <person name="Nantel A."/>
            <person name="Magee P.T."/>
        </authorList>
    </citation>
    <scope>GENOME REANNOTATION</scope>
    <source>
        <strain>SC5314 / ATCC MYA-2876</strain>
    </source>
</reference>
<reference key="3">
    <citation type="journal article" date="2013" name="Genome Biol.">
        <title>Assembly of a phased diploid Candida albicans genome facilitates allele-specific measurements and provides a simple model for repeat and indel structure.</title>
        <authorList>
            <person name="Muzzey D."/>
            <person name="Schwartz K."/>
            <person name="Weissman J.S."/>
            <person name="Sherlock G."/>
        </authorList>
    </citation>
    <scope>NUCLEOTIDE SEQUENCE [LARGE SCALE GENOMIC DNA]</scope>
    <scope>GENOME REANNOTATION</scope>
    <source>
        <strain>SC5314 / ATCC MYA-2876</strain>
    </source>
</reference>
<reference key="4">
    <citation type="journal article" date="2009" name="Eukaryot. Cell">
        <title>Property differences among the four major Candida albicans strain clades.</title>
        <authorList>
            <person name="MacCallum D.M."/>
            <person name="Castillo L."/>
            <person name="Nather K."/>
            <person name="Munro C.A."/>
            <person name="Brown A.J."/>
            <person name="Gow N.A."/>
            <person name="Odds F.C."/>
        </authorList>
    </citation>
    <scope>INDUCTION</scope>
</reference>
<reference key="5">
    <citation type="journal article" date="2011" name="Eukaryot. Cell">
        <title>Robust utilization of phospholipase-generated metabolites, glycerophosphodiesters, by Candida albicans: role of the CaGit1 permease.</title>
        <authorList>
            <person name="Bishop A.C."/>
            <person name="Sun T."/>
            <person name="Johnson M.E."/>
            <person name="Bruno V.M."/>
            <person name="Patton-Vogt J."/>
        </authorList>
    </citation>
    <scope>FUNCTION</scope>
    <scope>CATALYTIC ACTIVITY</scope>
    <scope>DISRUPTION PHENOTYPE</scope>
    <scope>BIOPHYSICOCHEMICAL PROPERTIES</scope>
    <scope>INDUCTION</scope>
</reference>
<reference key="6">
    <citation type="journal article" date="2013" name="J. Biol. Chem.">
        <title>Glycerophosphocholine utilization by Candida albicans: role of the Git3 transporter in virulence.</title>
        <authorList>
            <person name="Bishop A.C."/>
            <person name="Ganguly S."/>
            <person name="Solis N.V."/>
            <person name="Cooley B.M."/>
            <person name="Jensen-Seaman M.I."/>
            <person name="Filler S.G."/>
            <person name="Mitchell A.P."/>
            <person name="Patton-Vogt J."/>
        </authorList>
    </citation>
    <scope>FUNCTION</scope>
</reference>